<reference key="1">
    <citation type="journal article" date="2005" name="J. Bacteriol.">
        <title>Genomic sequence of an otitis media isolate of nontypeable Haemophilus influenzae: comparative study with H. influenzae serotype d, strain KW20.</title>
        <authorList>
            <person name="Harrison A."/>
            <person name="Dyer D.W."/>
            <person name="Gillaspy A."/>
            <person name="Ray W.C."/>
            <person name="Mungur R."/>
            <person name="Carson M.B."/>
            <person name="Zhong H."/>
            <person name="Gipson J."/>
            <person name="Gipson M."/>
            <person name="Johnson L.S."/>
            <person name="Lewis L."/>
            <person name="Bakaletz L.O."/>
            <person name="Munson R.S. Jr."/>
        </authorList>
    </citation>
    <scope>NUCLEOTIDE SEQUENCE [LARGE SCALE GENOMIC DNA]</scope>
    <source>
        <strain>86-028NP</strain>
    </source>
</reference>
<protein>
    <recommendedName>
        <fullName evidence="1">2-C-methyl-D-erythritol 2,4-cyclodiphosphate synthase</fullName>
        <shortName evidence="1">MECDP-synthase</shortName>
        <shortName evidence="1">MECPP-synthase</shortName>
        <shortName evidence="1">MECPS</shortName>
        <ecNumber evidence="1">4.6.1.12</ecNumber>
    </recommendedName>
</protein>
<feature type="chain" id="PRO_0000237730" description="2-C-methyl-D-erythritol 2,4-cyclodiphosphate synthase">
    <location>
        <begin position="1"/>
        <end position="158"/>
    </location>
</feature>
<feature type="binding site" evidence="1">
    <location>
        <begin position="9"/>
        <end position="11"/>
    </location>
    <ligand>
        <name>4-CDP-2-C-methyl-D-erythritol 2-phosphate</name>
        <dbReference type="ChEBI" id="CHEBI:57919"/>
    </ligand>
</feature>
<feature type="binding site" evidence="1">
    <location>
        <position position="9"/>
    </location>
    <ligand>
        <name>a divalent metal cation</name>
        <dbReference type="ChEBI" id="CHEBI:60240"/>
    </ligand>
</feature>
<feature type="binding site" evidence="1">
    <location>
        <position position="11"/>
    </location>
    <ligand>
        <name>a divalent metal cation</name>
        <dbReference type="ChEBI" id="CHEBI:60240"/>
    </ligand>
</feature>
<feature type="binding site" evidence="1">
    <location>
        <begin position="35"/>
        <end position="36"/>
    </location>
    <ligand>
        <name>4-CDP-2-C-methyl-D-erythritol 2-phosphate</name>
        <dbReference type="ChEBI" id="CHEBI:57919"/>
    </ligand>
</feature>
<feature type="binding site" evidence="1">
    <location>
        <position position="43"/>
    </location>
    <ligand>
        <name>a divalent metal cation</name>
        <dbReference type="ChEBI" id="CHEBI:60240"/>
    </ligand>
</feature>
<feature type="binding site" evidence="1">
    <location>
        <begin position="57"/>
        <end position="59"/>
    </location>
    <ligand>
        <name>4-CDP-2-C-methyl-D-erythritol 2-phosphate</name>
        <dbReference type="ChEBI" id="CHEBI:57919"/>
    </ligand>
</feature>
<feature type="binding site" evidence="1">
    <location>
        <begin position="62"/>
        <end position="66"/>
    </location>
    <ligand>
        <name>4-CDP-2-C-methyl-D-erythritol 2-phosphate</name>
        <dbReference type="ChEBI" id="CHEBI:57919"/>
    </ligand>
</feature>
<feature type="binding site" evidence="1">
    <location>
        <begin position="133"/>
        <end position="136"/>
    </location>
    <ligand>
        <name>4-CDP-2-C-methyl-D-erythritol 2-phosphate</name>
        <dbReference type="ChEBI" id="CHEBI:57919"/>
    </ligand>
</feature>
<feature type="binding site" evidence="1">
    <location>
        <position position="140"/>
    </location>
    <ligand>
        <name>4-CDP-2-C-methyl-D-erythritol 2-phosphate</name>
        <dbReference type="ChEBI" id="CHEBI:57919"/>
    </ligand>
</feature>
<feature type="binding site" evidence="1">
    <location>
        <position position="143"/>
    </location>
    <ligand>
        <name>4-CDP-2-C-methyl-D-erythritol 2-phosphate</name>
        <dbReference type="ChEBI" id="CHEBI:57919"/>
    </ligand>
</feature>
<feature type="site" description="Transition state stabilizer" evidence="1">
    <location>
        <position position="35"/>
    </location>
</feature>
<feature type="site" description="Transition state stabilizer" evidence="1">
    <location>
        <position position="134"/>
    </location>
</feature>
<evidence type="ECO:0000255" key="1">
    <source>
        <dbReference type="HAMAP-Rule" id="MF_00107"/>
    </source>
</evidence>
<name>ISPF_HAEI8</name>
<keyword id="KW-0414">Isoprene biosynthesis</keyword>
<keyword id="KW-0456">Lyase</keyword>
<keyword id="KW-0479">Metal-binding</keyword>
<proteinExistence type="inferred from homology"/>
<comment type="function">
    <text evidence="1">Involved in the biosynthesis of isopentenyl diphosphate (IPP) and dimethylallyl diphosphate (DMAPP), two major building blocks of isoprenoid compounds. Catalyzes the conversion of 4-diphosphocytidyl-2-C-methyl-D-erythritol 2-phosphate (CDP-ME2P) to 2-C-methyl-D-erythritol 2,4-cyclodiphosphate (ME-CPP) with a corresponding release of cytidine 5-monophosphate (CMP).</text>
</comment>
<comment type="catalytic activity">
    <reaction evidence="1">
        <text>4-CDP-2-C-methyl-D-erythritol 2-phosphate = 2-C-methyl-D-erythritol 2,4-cyclic diphosphate + CMP</text>
        <dbReference type="Rhea" id="RHEA:23864"/>
        <dbReference type="ChEBI" id="CHEBI:57919"/>
        <dbReference type="ChEBI" id="CHEBI:58483"/>
        <dbReference type="ChEBI" id="CHEBI:60377"/>
        <dbReference type="EC" id="4.6.1.12"/>
    </reaction>
</comment>
<comment type="cofactor">
    <cofactor evidence="1">
        <name>a divalent metal cation</name>
        <dbReference type="ChEBI" id="CHEBI:60240"/>
    </cofactor>
    <text evidence="1">Binds 1 divalent metal cation per subunit.</text>
</comment>
<comment type="pathway">
    <text evidence="1">Isoprenoid biosynthesis; isopentenyl diphosphate biosynthesis via DXP pathway; isopentenyl diphosphate from 1-deoxy-D-xylulose 5-phosphate: step 4/6.</text>
</comment>
<comment type="subunit">
    <text evidence="1">Homotrimer.</text>
</comment>
<comment type="similarity">
    <text evidence="1">Belongs to the IspF family.</text>
</comment>
<dbReference type="EC" id="4.6.1.12" evidence="1"/>
<dbReference type="EMBL" id="CP000057">
    <property type="protein sequence ID" value="AAX87702.1"/>
    <property type="molecule type" value="Genomic_DNA"/>
</dbReference>
<dbReference type="RefSeq" id="WP_006995249.1">
    <property type="nucleotide sequence ID" value="NC_007146.2"/>
</dbReference>
<dbReference type="SMR" id="Q4QMP5"/>
<dbReference type="KEGG" id="hit:NTHI0793"/>
<dbReference type="HOGENOM" id="CLU_084630_2_0_6"/>
<dbReference type="UniPathway" id="UPA00056">
    <property type="reaction ID" value="UER00095"/>
</dbReference>
<dbReference type="Proteomes" id="UP000002525">
    <property type="component" value="Chromosome"/>
</dbReference>
<dbReference type="GO" id="GO:0008685">
    <property type="term" value="F:2-C-methyl-D-erythritol 2,4-cyclodiphosphate synthase activity"/>
    <property type="evidence" value="ECO:0007669"/>
    <property type="project" value="UniProtKB-UniRule"/>
</dbReference>
<dbReference type="GO" id="GO:0046872">
    <property type="term" value="F:metal ion binding"/>
    <property type="evidence" value="ECO:0007669"/>
    <property type="project" value="UniProtKB-KW"/>
</dbReference>
<dbReference type="GO" id="GO:0019288">
    <property type="term" value="P:isopentenyl diphosphate biosynthetic process, methylerythritol 4-phosphate pathway"/>
    <property type="evidence" value="ECO:0007669"/>
    <property type="project" value="UniProtKB-UniRule"/>
</dbReference>
<dbReference type="GO" id="GO:0016114">
    <property type="term" value="P:terpenoid biosynthetic process"/>
    <property type="evidence" value="ECO:0007669"/>
    <property type="project" value="InterPro"/>
</dbReference>
<dbReference type="CDD" id="cd00554">
    <property type="entry name" value="MECDP_synthase"/>
    <property type="match status" value="1"/>
</dbReference>
<dbReference type="FunFam" id="3.30.1330.50:FF:000001">
    <property type="entry name" value="2-C-methyl-D-erythritol 2,4-cyclodiphosphate synthase"/>
    <property type="match status" value="1"/>
</dbReference>
<dbReference type="Gene3D" id="3.30.1330.50">
    <property type="entry name" value="2-C-methyl-D-erythritol 2,4-cyclodiphosphate synthase"/>
    <property type="match status" value="1"/>
</dbReference>
<dbReference type="HAMAP" id="MF_00107">
    <property type="entry name" value="IspF"/>
    <property type="match status" value="1"/>
</dbReference>
<dbReference type="InterPro" id="IPR003526">
    <property type="entry name" value="MECDP_synthase"/>
</dbReference>
<dbReference type="InterPro" id="IPR020555">
    <property type="entry name" value="MECDP_synthase_CS"/>
</dbReference>
<dbReference type="InterPro" id="IPR036571">
    <property type="entry name" value="MECDP_synthase_sf"/>
</dbReference>
<dbReference type="NCBIfam" id="TIGR00151">
    <property type="entry name" value="ispF"/>
    <property type="match status" value="1"/>
</dbReference>
<dbReference type="PANTHER" id="PTHR43181">
    <property type="entry name" value="2-C-METHYL-D-ERYTHRITOL 2,4-CYCLODIPHOSPHATE SYNTHASE, CHLOROPLASTIC"/>
    <property type="match status" value="1"/>
</dbReference>
<dbReference type="PANTHER" id="PTHR43181:SF1">
    <property type="entry name" value="2-C-METHYL-D-ERYTHRITOL 2,4-CYCLODIPHOSPHATE SYNTHASE, CHLOROPLASTIC"/>
    <property type="match status" value="1"/>
</dbReference>
<dbReference type="Pfam" id="PF02542">
    <property type="entry name" value="YgbB"/>
    <property type="match status" value="1"/>
</dbReference>
<dbReference type="SUPFAM" id="SSF69765">
    <property type="entry name" value="IpsF-like"/>
    <property type="match status" value="1"/>
</dbReference>
<dbReference type="PROSITE" id="PS01350">
    <property type="entry name" value="ISPF"/>
    <property type="match status" value="1"/>
</dbReference>
<gene>
    <name evidence="1" type="primary">ispF</name>
    <name type="ordered locus">NTHI0793</name>
</gene>
<sequence length="158" mass="17179">MIRIGHGFDVHAFGEDRPLIIGGVEVPYHTGFIAHSDGDVALHALTDAILGAAALGDIGKLFPDTDMQYKNADSRGLLREAFRQVQEKGYKIGNVDITIIAQAPKMRPHIDAMRAKIAEDILCDIEQVNVKATTTEKLGFTGRQEGIACEAVALLIRQ</sequence>
<accession>Q4QMP5</accession>
<organism>
    <name type="scientific">Haemophilus influenzae (strain 86-028NP)</name>
    <dbReference type="NCBI Taxonomy" id="281310"/>
    <lineage>
        <taxon>Bacteria</taxon>
        <taxon>Pseudomonadati</taxon>
        <taxon>Pseudomonadota</taxon>
        <taxon>Gammaproteobacteria</taxon>
        <taxon>Pasteurellales</taxon>
        <taxon>Pasteurellaceae</taxon>
        <taxon>Haemophilus</taxon>
    </lineage>
</organism>